<sequence length="1259" mass="143753">MAATGVLPFIRGVDLSGNDFKGGNFPEHVKSMTSLRWLKLNRTGLCYLPEELASLQKLEHLSVSHNSLTTLHGELSSLPNLRAVVARANNLKNSGVPDDIFQLDDLSVLDLSHNQLTEIPRDLENSRNMLVLNLSHNSIDNIPNQLFINLTDLLYLDLSDNNLDSLPPQMRRLVHLQTLILNNNPLMHAQLRQLPVMVSLQTLHLRNTQRTQNNMPTSLEGLSNLTDVDLSCNDLTRVPECLYSLVNLKRLNLSSNQISELSLCIDQWTKLETLNLSRNQLTSLPSAICKLSKLKKLYVNSNKIDFDGLPSGVGKLSNLVEFMAANNNLELVPEGLCRCGKLKKLVLNKNRLVTLPEAIHFLTELEVLDVRENPNLVMPPKPVDRTAEWYNIDFSLQNQLRLAGASPATVAAAGGGNSPRDHMARKMRLRRCKDSAHDDQAKQVLKGMSDVAQEKNKSIEENGDLKYSDLKTKRWDKNLEKPQLDYSEFFLEDVGQIPGVSVWQIENFIPIQVDEAFHGKFYEADCYIILKTFLDENGALNWQIFYWIGQDATLDKKAGAAIHAVNLRNYLGAECRTIREEMGDESEEFTVVFDHEISYIEGGTASGFYTVEDTQYPTRLYRVYGKKNIRLESVPLKASSLDPQFVFLLDTGLEIYVWRGGNATLGGTTKARLFAEKINKNERKSKAEITTLMQNQEPPEFWEVLGGQPEEIKKHVPDDFTPIRPKLYKVGLGLGYLELPQINYKLSVEHKDKLKLDVVPELRLVQGLLDTKGVYILDCWSDVFIWIGRKSPRLVRAAALKLGQEVCGMLHRPKHAVVIRNLEGTECQVFKSKFKNWDDVLKVDYTRNAESVKQEAGLSGKVKKDVEQKDQMKADLTALFLPRQPAMPLTEAEQMMEEWNEDLDGMEGFVLEGKKFARLPEEEFGHFHTQDCYVFLCRYWVPVEYEDDKEKGKEKGEEGDDEEKQPEEDFQCVVYFWQGREASNMGWLTFTFSLQKKFESLFPGKLEVVRMTQQQENLKFLSHFKRKFIIHKGKRKLKVDSVQPSLYHIRTNGSALCTRTIQIATDSSNLNSEFCFILKVPFESTDNQGIVYTWVGRAADPDEAKLAEEIMNTMFDDTYSKQVINEGEEPENFFWVGIGSQKTYDEDAEYMKYARLFRCSNEKGYFAVSEKCSDFCQDDLADDDIMLLDNGKEVYMWVGTQTSQVEIKLSLKACQVYIQHMRSKDTENPRKLRLVRKGNEPHCFTRCFHAWSAFKTAPA</sequence>
<proteinExistence type="evidence at protein level"/>
<organism>
    <name type="scientific">Danio rerio</name>
    <name type="common">Zebrafish</name>
    <name type="synonym">Brachydanio rerio</name>
    <dbReference type="NCBI Taxonomy" id="7955"/>
    <lineage>
        <taxon>Eukaryota</taxon>
        <taxon>Metazoa</taxon>
        <taxon>Chordata</taxon>
        <taxon>Craniata</taxon>
        <taxon>Vertebrata</taxon>
        <taxon>Euteleostomi</taxon>
        <taxon>Actinopterygii</taxon>
        <taxon>Neopterygii</taxon>
        <taxon>Teleostei</taxon>
        <taxon>Ostariophysi</taxon>
        <taxon>Cypriniformes</taxon>
        <taxon>Danionidae</taxon>
        <taxon>Danioninae</taxon>
        <taxon>Danio</taxon>
    </lineage>
</organism>
<reference key="1">
    <citation type="journal article" date="2011" name="Dev. Biol.">
        <title>Developmental transition of touch response from slow muscle-mediated coilings to fast muscle-mediated burst swimming in zebrafish.</title>
        <authorList>
            <person name="Naganawa Y."/>
            <person name="Hirata H."/>
        </authorList>
    </citation>
    <scope>NUCLEOTIDE SEQUENCE [MRNA]</scope>
    <scope>FUNCTION</scope>
</reference>
<reference key="2">
    <citation type="journal article" date="2013" name="Nature">
        <title>The zebrafish reference genome sequence and its relationship to the human genome.</title>
        <authorList>
            <person name="Howe K."/>
            <person name="Clark M.D."/>
            <person name="Torroja C.F."/>
            <person name="Torrance J."/>
            <person name="Berthelot C."/>
            <person name="Muffato M."/>
            <person name="Collins J.E."/>
            <person name="Humphray S."/>
            <person name="McLaren K."/>
            <person name="Matthews L."/>
            <person name="McLaren S."/>
            <person name="Sealy I."/>
            <person name="Caccamo M."/>
            <person name="Churcher C."/>
            <person name="Scott C."/>
            <person name="Barrett J.C."/>
            <person name="Koch R."/>
            <person name="Rauch G.J."/>
            <person name="White S."/>
            <person name="Chow W."/>
            <person name="Kilian B."/>
            <person name="Quintais L.T."/>
            <person name="Guerra-Assuncao J.A."/>
            <person name="Zhou Y."/>
            <person name="Gu Y."/>
            <person name="Yen J."/>
            <person name="Vogel J.H."/>
            <person name="Eyre T."/>
            <person name="Redmond S."/>
            <person name="Banerjee R."/>
            <person name="Chi J."/>
            <person name="Fu B."/>
            <person name="Langley E."/>
            <person name="Maguire S.F."/>
            <person name="Laird G.K."/>
            <person name="Lloyd D."/>
            <person name="Kenyon E."/>
            <person name="Donaldson S."/>
            <person name="Sehra H."/>
            <person name="Almeida-King J."/>
            <person name="Loveland J."/>
            <person name="Trevanion S."/>
            <person name="Jones M."/>
            <person name="Quail M."/>
            <person name="Willey D."/>
            <person name="Hunt A."/>
            <person name="Burton J."/>
            <person name="Sims S."/>
            <person name="McLay K."/>
            <person name="Plumb B."/>
            <person name="Davis J."/>
            <person name="Clee C."/>
            <person name="Oliver K."/>
            <person name="Clark R."/>
            <person name="Riddle C."/>
            <person name="Elliot D."/>
            <person name="Threadgold G."/>
            <person name="Harden G."/>
            <person name="Ware D."/>
            <person name="Begum S."/>
            <person name="Mortimore B."/>
            <person name="Kerry G."/>
            <person name="Heath P."/>
            <person name="Phillimore B."/>
            <person name="Tracey A."/>
            <person name="Corby N."/>
            <person name="Dunn M."/>
            <person name="Johnson C."/>
            <person name="Wood J."/>
            <person name="Clark S."/>
            <person name="Pelan S."/>
            <person name="Griffiths G."/>
            <person name="Smith M."/>
            <person name="Glithero R."/>
            <person name="Howden P."/>
            <person name="Barker N."/>
            <person name="Lloyd C."/>
            <person name="Stevens C."/>
            <person name="Harley J."/>
            <person name="Holt K."/>
            <person name="Panagiotidis G."/>
            <person name="Lovell J."/>
            <person name="Beasley H."/>
            <person name="Henderson C."/>
            <person name="Gordon D."/>
            <person name="Auger K."/>
            <person name="Wright D."/>
            <person name="Collins J."/>
            <person name="Raisen C."/>
            <person name="Dyer L."/>
            <person name="Leung K."/>
            <person name="Robertson L."/>
            <person name="Ambridge K."/>
            <person name="Leongamornlert D."/>
            <person name="McGuire S."/>
            <person name="Gilderthorp R."/>
            <person name="Griffiths C."/>
            <person name="Manthravadi D."/>
            <person name="Nichol S."/>
            <person name="Barker G."/>
            <person name="Whitehead S."/>
            <person name="Kay M."/>
            <person name="Brown J."/>
            <person name="Murnane C."/>
            <person name="Gray E."/>
            <person name="Humphries M."/>
            <person name="Sycamore N."/>
            <person name="Barker D."/>
            <person name="Saunders D."/>
            <person name="Wallis J."/>
            <person name="Babbage A."/>
            <person name="Hammond S."/>
            <person name="Mashreghi-Mohammadi M."/>
            <person name="Barr L."/>
            <person name="Martin S."/>
            <person name="Wray P."/>
            <person name="Ellington A."/>
            <person name="Matthews N."/>
            <person name="Ellwood M."/>
            <person name="Woodmansey R."/>
            <person name="Clark G."/>
            <person name="Cooper J."/>
            <person name="Tromans A."/>
            <person name="Grafham D."/>
            <person name="Skuce C."/>
            <person name="Pandian R."/>
            <person name="Andrews R."/>
            <person name="Harrison E."/>
            <person name="Kimberley A."/>
            <person name="Garnett J."/>
            <person name="Fosker N."/>
            <person name="Hall R."/>
            <person name="Garner P."/>
            <person name="Kelly D."/>
            <person name="Bird C."/>
            <person name="Palmer S."/>
            <person name="Gehring I."/>
            <person name="Berger A."/>
            <person name="Dooley C.M."/>
            <person name="Ersan-Urun Z."/>
            <person name="Eser C."/>
            <person name="Geiger H."/>
            <person name="Geisler M."/>
            <person name="Karotki L."/>
            <person name="Kirn A."/>
            <person name="Konantz J."/>
            <person name="Konantz M."/>
            <person name="Oberlander M."/>
            <person name="Rudolph-Geiger S."/>
            <person name="Teucke M."/>
            <person name="Lanz C."/>
            <person name="Raddatz G."/>
            <person name="Osoegawa K."/>
            <person name="Zhu B."/>
            <person name="Rapp A."/>
            <person name="Widaa S."/>
            <person name="Langford C."/>
            <person name="Yang F."/>
            <person name="Schuster S.C."/>
            <person name="Carter N.P."/>
            <person name="Harrow J."/>
            <person name="Ning Z."/>
            <person name="Herrero J."/>
            <person name="Searle S.M."/>
            <person name="Enright A."/>
            <person name="Geisler R."/>
            <person name="Plasterk R.H."/>
            <person name="Lee C."/>
            <person name="Westerfield M."/>
            <person name="de Jong P.J."/>
            <person name="Zon L.I."/>
            <person name="Postlethwait J.H."/>
            <person name="Nusslein-Volhard C."/>
            <person name="Hubbard T.J."/>
            <person name="Roest Crollius H."/>
            <person name="Rogers J."/>
            <person name="Stemple D.L."/>
        </authorList>
    </citation>
    <scope>NUCLEOTIDE SEQUENCE [LARGE SCALE GENOMIC DNA]</scope>
    <source>
        <strain>Tuebingen</strain>
    </source>
</reference>
<reference key="3">
    <citation type="journal article" date="2023" name="JCI Insight">
        <title>Biallelic variants in FLII cause pediatric cardiomyopathy by disrupting cardiomyocyte cell adhesion and myofibril organization.</title>
        <authorList>
            <person name="Ruijmbeek C.W."/>
            <person name="Housley F."/>
            <person name="Idrees H."/>
            <person name="Housley M.P."/>
            <person name="Pestel J."/>
            <person name="Keller L."/>
            <person name="Lai J.K."/>
            <person name="der Linde H.C.V."/>
            <person name="Willemsen R."/>
            <person name="Piesker J."/>
            <person name="Al-Hassnan Z.N."/>
            <person name="Almesned A."/>
            <person name="Dalinghaus M."/>
            <person name="den Bersselaar L.M.V."/>
            <person name="van Slegtenhorst M.A."/>
            <person name="Tessadori F."/>
            <person name="Bakkers J."/>
            <person name="van Ham T.J."/>
            <person name="Stainier D.Y."/>
            <person name="Verhagen J.M."/>
            <person name="Reischauer S."/>
        </authorList>
    </citation>
    <scope>FUNCTION</scope>
    <scope>TISSUE SPECIFICITY</scope>
    <scope>MUTAGENESIS OF ARG-1230</scope>
</reference>
<evidence type="ECO:0000250" key="1"/>
<evidence type="ECO:0000250" key="2">
    <source>
        <dbReference type="UniProtKB" id="Q9JJ28"/>
    </source>
</evidence>
<evidence type="ECO:0000255" key="3"/>
<evidence type="ECO:0000269" key="4">
    <source>
    </source>
</evidence>
<evidence type="ECO:0000303" key="5">
    <source>
    </source>
</evidence>
<evidence type="ECO:0000312" key="6">
    <source>
        <dbReference type="ZFIN" id="ZDB-GENE-071212-3"/>
    </source>
</evidence>
<keyword id="KW-0009">Actin-binding</keyword>
<keyword id="KW-0010">Activator</keyword>
<keyword id="KW-0965">Cell junction</keyword>
<keyword id="KW-0963">Cytoplasm</keyword>
<keyword id="KW-0206">Cytoskeleton</keyword>
<keyword id="KW-0433">Leucine-rich repeat</keyword>
<keyword id="KW-0539">Nucleus</keyword>
<keyword id="KW-1185">Reference proteome</keyword>
<keyword id="KW-0677">Repeat</keyword>
<keyword id="KW-0804">Transcription</keyword>
<keyword id="KW-0805">Transcription regulation</keyword>
<name>FLII_DANRE</name>
<comment type="function">
    <text evidence="1 2">Is a regulator of actin polymerization, required for proper myofibril organization and the assembly of cardiomyocyte cell adhesion complexes (PubMed:37561591). Is a regulator of the length of sarcomeric thin filaments (By similarity). Regulates cytoskeletal rearrangements involved in cytokinesis and cell migration, by inhibiting Rac1-dependent paxillin phosphorylation (By similarity). May play a role as coactivator in transcriptional activation by hormone-activated nuclear receptors (NR) and acts in cooperation with NCOA2 and CARM1. Involved in estrogen hormone signaling (By similarity).</text>
</comment>
<comment type="subcellular location">
    <subcellularLocation>
        <location evidence="2">Nucleus</location>
    </subcellularLocation>
    <subcellularLocation>
        <location evidence="2">Cytoplasm</location>
        <location evidence="2">Cytoskeleton</location>
    </subcellularLocation>
    <subcellularLocation>
        <location evidence="2">Cytoplasm</location>
        <location evidence="2">Cytoskeleton</location>
        <location evidence="2">Microtubule organizing center</location>
        <location evidence="2">Centrosome</location>
    </subcellularLocation>
    <subcellularLocation>
        <location evidence="2">Cell junction</location>
        <location evidence="2">Focal adhesion</location>
    </subcellularLocation>
    <text evidence="2">Colocalizes to actin-rich structures in blastocysts and, together with HRAS, RHOA and CDC42, in migrating fibroblasts.</text>
</comment>
<comment type="tissue specificity">
    <text evidence="4">Expressed in ventricular cardiomyocytes, where it particularly localizes to intercalated disks and costamere-like structures (at protein level).</text>
</comment>
<dbReference type="EMBL" id="AB355792">
    <property type="protein sequence ID" value="BAK53477.1"/>
    <property type="molecule type" value="mRNA"/>
</dbReference>
<dbReference type="RefSeq" id="NP_001244075.1">
    <property type="nucleotide sequence ID" value="NM_001257146.1"/>
</dbReference>
<dbReference type="SMR" id="F8WK50"/>
<dbReference type="GeneID" id="560281"/>
<dbReference type="KEGG" id="dre:560281"/>
<dbReference type="AGR" id="ZFIN:ZDB-GENE-071212-3"/>
<dbReference type="CTD" id="2314"/>
<dbReference type="ZFIN" id="ZDB-GENE-071212-3">
    <property type="gene designation" value="flii"/>
</dbReference>
<dbReference type="OrthoDB" id="20529at2759"/>
<dbReference type="Proteomes" id="UP000000437">
    <property type="component" value="Chromosome 3"/>
</dbReference>
<dbReference type="GO" id="GO:0015629">
    <property type="term" value="C:actin cytoskeleton"/>
    <property type="evidence" value="ECO:0000318"/>
    <property type="project" value="GO_Central"/>
</dbReference>
<dbReference type="GO" id="GO:0005813">
    <property type="term" value="C:centrosome"/>
    <property type="evidence" value="ECO:0007669"/>
    <property type="project" value="UniProtKB-SubCell"/>
</dbReference>
<dbReference type="GO" id="GO:0005737">
    <property type="term" value="C:cytoplasm"/>
    <property type="evidence" value="ECO:0000318"/>
    <property type="project" value="GO_Central"/>
</dbReference>
<dbReference type="GO" id="GO:0005925">
    <property type="term" value="C:focal adhesion"/>
    <property type="evidence" value="ECO:0007669"/>
    <property type="project" value="UniProtKB-SubCell"/>
</dbReference>
<dbReference type="GO" id="GO:0005634">
    <property type="term" value="C:nucleus"/>
    <property type="evidence" value="ECO:0000318"/>
    <property type="project" value="GO_Central"/>
</dbReference>
<dbReference type="GO" id="GO:0051015">
    <property type="term" value="F:actin filament binding"/>
    <property type="evidence" value="ECO:0000318"/>
    <property type="project" value="GO_Central"/>
</dbReference>
<dbReference type="GO" id="GO:0005546">
    <property type="term" value="F:phosphatidylinositol-4,5-bisphosphate binding"/>
    <property type="evidence" value="ECO:0000318"/>
    <property type="project" value="GO_Central"/>
</dbReference>
<dbReference type="GO" id="GO:0051014">
    <property type="term" value="P:actin filament severing"/>
    <property type="evidence" value="ECO:0000318"/>
    <property type="project" value="GO_Central"/>
</dbReference>
<dbReference type="GO" id="GO:0008154">
    <property type="term" value="P:actin polymerization or depolymerization"/>
    <property type="evidence" value="ECO:0000318"/>
    <property type="project" value="GO_Central"/>
</dbReference>
<dbReference type="GO" id="GO:0051016">
    <property type="term" value="P:barbed-end actin filament capping"/>
    <property type="evidence" value="ECO:0000318"/>
    <property type="project" value="GO_Central"/>
</dbReference>
<dbReference type="GO" id="GO:0030239">
    <property type="term" value="P:myofibril assembly"/>
    <property type="evidence" value="ECO:0000318"/>
    <property type="project" value="GO_Central"/>
</dbReference>
<dbReference type="GO" id="GO:0045214">
    <property type="term" value="P:sarcomere organization"/>
    <property type="evidence" value="ECO:0000315"/>
    <property type="project" value="ZFIN"/>
</dbReference>
<dbReference type="CDD" id="cd11280">
    <property type="entry name" value="gelsolin_like"/>
    <property type="match status" value="2"/>
</dbReference>
<dbReference type="CDD" id="cd11290">
    <property type="entry name" value="gelsolin_S1_like"/>
    <property type="match status" value="1"/>
</dbReference>
<dbReference type="CDD" id="cd11292">
    <property type="entry name" value="gelsolin_S3_like"/>
    <property type="match status" value="1"/>
</dbReference>
<dbReference type="CDD" id="cd11288">
    <property type="entry name" value="gelsolin_S5_like"/>
    <property type="match status" value="1"/>
</dbReference>
<dbReference type="CDD" id="cd11291">
    <property type="entry name" value="gelsolin_S6_like"/>
    <property type="match status" value="1"/>
</dbReference>
<dbReference type="FunFam" id="3.80.10.10:FF:000033">
    <property type="entry name" value="FLII, actin remodeling protein"/>
    <property type="match status" value="1"/>
</dbReference>
<dbReference type="FunFam" id="3.80.10.10:FF:000050">
    <property type="entry name" value="FLII, actin remodeling protein"/>
    <property type="match status" value="1"/>
</dbReference>
<dbReference type="FunFam" id="3.80.10.10:FF:000054">
    <property type="entry name" value="FLII, actin remodeling protein"/>
    <property type="match status" value="1"/>
</dbReference>
<dbReference type="FunFam" id="3.40.20.10:FF:000019">
    <property type="entry name" value="protein flightless-1 homolog isoform X1"/>
    <property type="match status" value="1"/>
</dbReference>
<dbReference type="FunFam" id="3.40.20.10:FF:000020">
    <property type="entry name" value="protein flightless-1 homolog isoform X1"/>
    <property type="match status" value="1"/>
</dbReference>
<dbReference type="FunFam" id="3.40.20.10:FF:000030">
    <property type="entry name" value="protein flightless-1 homolog isoform X1"/>
    <property type="match status" value="1"/>
</dbReference>
<dbReference type="FunFam" id="3.40.20.10:FF:000031">
    <property type="entry name" value="protein flightless-1 homolog isoform X1"/>
    <property type="match status" value="1"/>
</dbReference>
<dbReference type="FunFam" id="3.40.20.10:FF:000034">
    <property type="entry name" value="protein flightless-1 homolog isoform X1"/>
    <property type="match status" value="1"/>
</dbReference>
<dbReference type="FunFam" id="3.40.20.10:FF:000021">
    <property type="entry name" value="protein flightless-1 homolog isoform X2"/>
    <property type="match status" value="1"/>
</dbReference>
<dbReference type="Gene3D" id="3.80.10.10">
    <property type="entry name" value="Ribonuclease Inhibitor"/>
    <property type="match status" value="3"/>
</dbReference>
<dbReference type="Gene3D" id="3.40.20.10">
    <property type="entry name" value="Severin"/>
    <property type="match status" value="6"/>
</dbReference>
<dbReference type="InterPro" id="IPR029006">
    <property type="entry name" value="ADF-H/Gelsolin-like_dom_sf"/>
</dbReference>
<dbReference type="InterPro" id="IPR007123">
    <property type="entry name" value="Gelsolin-like_dom"/>
</dbReference>
<dbReference type="InterPro" id="IPR036180">
    <property type="entry name" value="Gelsolin-like_dom_sf"/>
</dbReference>
<dbReference type="InterPro" id="IPR001611">
    <property type="entry name" value="Leu-rich_rpt"/>
</dbReference>
<dbReference type="InterPro" id="IPR003591">
    <property type="entry name" value="Leu-rich_rpt_typical-subtyp"/>
</dbReference>
<dbReference type="InterPro" id="IPR032675">
    <property type="entry name" value="LRR_dom_sf"/>
</dbReference>
<dbReference type="InterPro" id="IPR055414">
    <property type="entry name" value="LRR_R13L4/SHOC2-like"/>
</dbReference>
<dbReference type="InterPro" id="IPR007122">
    <property type="entry name" value="Villin/Gelsolin"/>
</dbReference>
<dbReference type="PANTHER" id="PTHR11977:SF51">
    <property type="entry name" value="PROTEIN FLIGHTLESS-1 HOMOLOG"/>
    <property type="match status" value="1"/>
</dbReference>
<dbReference type="PANTHER" id="PTHR11977">
    <property type="entry name" value="VILLIN"/>
    <property type="match status" value="1"/>
</dbReference>
<dbReference type="Pfam" id="PF00626">
    <property type="entry name" value="Gelsolin"/>
    <property type="match status" value="4"/>
</dbReference>
<dbReference type="Pfam" id="PF00560">
    <property type="entry name" value="LRR_1"/>
    <property type="match status" value="1"/>
</dbReference>
<dbReference type="Pfam" id="PF23598">
    <property type="entry name" value="LRR_14"/>
    <property type="match status" value="1"/>
</dbReference>
<dbReference type="Pfam" id="PF13855">
    <property type="entry name" value="LRR_8"/>
    <property type="match status" value="1"/>
</dbReference>
<dbReference type="PRINTS" id="PR00597">
    <property type="entry name" value="GELSOLIN"/>
</dbReference>
<dbReference type="PRINTS" id="PR00019">
    <property type="entry name" value="LEURICHRPT"/>
</dbReference>
<dbReference type="SMART" id="SM00262">
    <property type="entry name" value="GEL"/>
    <property type="match status" value="6"/>
</dbReference>
<dbReference type="SMART" id="SM00364">
    <property type="entry name" value="LRR_BAC"/>
    <property type="match status" value="6"/>
</dbReference>
<dbReference type="SMART" id="SM00365">
    <property type="entry name" value="LRR_SD22"/>
    <property type="match status" value="5"/>
</dbReference>
<dbReference type="SMART" id="SM00369">
    <property type="entry name" value="LRR_TYP"/>
    <property type="match status" value="10"/>
</dbReference>
<dbReference type="SUPFAM" id="SSF55753">
    <property type="entry name" value="Actin depolymerizing proteins"/>
    <property type="match status" value="5"/>
</dbReference>
<dbReference type="SUPFAM" id="SSF82754">
    <property type="entry name" value="C-terminal, gelsolin-like domain of Sec23/24"/>
    <property type="match status" value="1"/>
</dbReference>
<dbReference type="SUPFAM" id="SSF52058">
    <property type="entry name" value="L domain-like"/>
    <property type="match status" value="2"/>
</dbReference>
<dbReference type="PROSITE" id="PS51450">
    <property type="entry name" value="LRR"/>
    <property type="match status" value="6"/>
</dbReference>
<protein>
    <recommendedName>
        <fullName evidence="5">Protein flightless-1 homolog</fullName>
    </recommendedName>
    <alternativeName>
        <fullName evidence="6">Flii actin remodeling protein</fullName>
    </alternativeName>
</protein>
<gene>
    <name evidence="6" type="primary">flii</name>
</gene>
<feature type="chain" id="PRO_0000460439" description="Protein flightless-1 homolog">
    <location>
        <begin position="1"/>
        <end position="1259"/>
    </location>
</feature>
<feature type="repeat" description="LRR 1" evidence="3">
    <location>
        <begin position="7"/>
        <end position="32"/>
    </location>
</feature>
<feature type="repeat" description="LRR 2" evidence="3">
    <location>
        <begin position="33"/>
        <end position="55"/>
    </location>
</feature>
<feature type="repeat" description="LRR 3" evidence="3">
    <location>
        <begin position="56"/>
        <end position="78"/>
    </location>
</feature>
<feature type="repeat" description="LRR 4" evidence="3">
    <location>
        <begin position="80"/>
        <end position="103"/>
    </location>
</feature>
<feature type="repeat" description="LRR 5" evidence="3">
    <location>
        <begin position="104"/>
        <end position="126"/>
    </location>
</feature>
<feature type="repeat" description="LRR 6" evidence="3">
    <location>
        <begin position="128"/>
        <end position="149"/>
    </location>
</feature>
<feature type="repeat" description="LRR 7" evidence="3">
    <location>
        <begin position="150"/>
        <end position="173"/>
    </location>
</feature>
<feature type="repeat" description="LRR 8" evidence="3">
    <location>
        <begin position="176"/>
        <end position="201"/>
    </location>
</feature>
<feature type="repeat" description="LRR 9" evidence="3">
    <location>
        <begin position="222"/>
        <end position="245"/>
    </location>
</feature>
<feature type="repeat" description="LRR 10" evidence="3">
    <location>
        <begin position="247"/>
        <end position="268"/>
    </location>
</feature>
<feature type="repeat" description="LRR 11" evidence="3">
    <location>
        <begin position="269"/>
        <end position="291"/>
    </location>
</feature>
<feature type="repeat" description="LRR 12" evidence="3">
    <location>
        <begin position="293"/>
        <end position="316"/>
    </location>
</feature>
<feature type="repeat" description="LRR 13" evidence="3">
    <location>
        <begin position="317"/>
        <end position="339"/>
    </location>
</feature>
<feature type="repeat" description="LRR 14" evidence="3">
    <location>
        <begin position="340"/>
        <end position="363"/>
    </location>
</feature>
<feature type="repeat" description="LRR 15" evidence="3">
    <location>
        <begin position="365"/>
        <end position="385"/>
    </location>
</feature>
<feature type="repeat" description="Gelsolin-like 1" evidence="3">
    <location>
        <begin position="509"/>
        <end position="589"/>
    </location>
</feature>
<feature type="repeat" description="Gelsolin-like 2" evidence="3">
    <location>
        <begin position="628"/>
        <end position="702"/>
    </location>
</feature>
<feature type="repeat" description="Gelsolin-like 3" evidence="3">
    <location>
        <begin position="757"/>
        <end position="830"/>
    </location>
</feature>
<feature type="repeat" description="Gelsolin-like 4" evidence="3">
    <location>
        <begin position="1170"/>
        <end position="1225"/>
    </location>
</feature>
<feature type="mutagenesis site" description="Homozygous mutant larvae show disorganized myofibrils in myocardium and abnormal morphology of the ventricular trabecular network." evidence="4">
    <original>R</original>
    <variation>C</variation>
    <location>
        <position position="1230"/>
    </location>
</feature>
<accession>F8WK50</accession>